<reference key="1">
    <citation type="journal article" date="2006" name="Genome Res.">
        <title>Massive genome erosion and functional adaptations provide insights into the symbiotic lifestyle of Sodalis glossinidius in the tsetse host.</title>
        <authorList>
            <person name="Toh H."/>
            <person name="Weiss B.L."/>
            <person name="Perkin S.A.H."/>
            <person name="Yamashita A."/>
            <person name="Oshima K."/>
            <person name="Hattori M."/>
            <person name="Aksoy S."/>
        </authorList>
    </citation>
    <scope>NUCLEOTIDE SEQUENCE [LARGE SCALE GENOMIC DNA]</scope>
    <source>
        <strain>morsitans</strain>
    </source>
</reference>
<feature type="chain" id="PRO_1000065660" description="Undecaprenyl-phosphate 4-deoxy-4-formamido-L-arabinose transferase">
    <location>
        <begin position="1"/>
        <end position="326"/>
    </location>
</feature>
<feature type="transmembrane region" description="Helical" evidence="1">
    <location>
        <begin position="235"/>
        <end position="255"/>
    </location>
</feature>
<feature type="transmembrane region" description="Helical" evidence="1">
    <location>
        <begin position="270"/>
        <end position="290"/>
    </location>
</feature>
<protein>
    <recommendedName>
        <fullName evidence="1">Undecaprenyl-phosphate 4-deoxy-4-formamido-L-arabinose transferase</fullName>
        <ecNumber evidence="1">2.4.2.53</ecNumber>
    </recommendedName>
    <alternativeName>
        <fullName evidence="1">Undecaprenyl-phosphate Ara4FN transferase</fullName>
        <shortName evidence="1">Ara4FN transferase</shortName>
    </alternativeName>
</protein>
<comment type="function">
    <text evidence="1">Catalyzes the transfer of 4-deoxy-4-formamido-L-arabinose from UDP to undecaprenyl phosphate. The modified arabinose is attached to lipid A and is required for resistance to polymyxin and cationic antimicrobial peptides.</text>
</comment>
<comment type="catalytic activity">
    <reaction evidence="1">
        <text>UDP-4-deoxy-4-formamido-beta-L-arabinose + di-trans,octa-cis-undecaprenyl phosphate = 4-deoxy-4-formamido-alpha-L-arabinopyranosyl di-trans,octa-cis-undecaprenyl phosphate + UDP</text>
        <dbReference type="Rhea" id="RHEA:27722"/>
        <dbReference type="ChEBI" id="CHEBI:58223"/>
        <dbReference type="ChEBI" id="CHEBI:58709"/>
        <dbReference type="ChEBI" id="CHEBI:58909"/>
        <dbReference type="ChEBI" id="CHEBI:60392"/>
        <dbReference type="EC" id="2.4.2.53"/>
    </reaction>
</comment>
<comment type="pathway">
    <text evidence="1">Glycolipid biosynthesis; 4-amino-4-deoxy-alpha-L-arabinose undecaprenyl phosphate biosynthesis; 4-amino-4-deoxy-alpha-L-arabinose undecaprenyl phosphate from UDP-4-deoxy-4-formamido-beta-L-arabinose and undecaprenyl phosphate: step 1/2.</text>
</comment>
<comment type="pathway">
    <text evidence="1">Bacterial outer membrane biogenesis; lipopolysaccharide biosynthesis.</text>
</comment>
<comment type="subcellular location">
    <subcellularLocation>
        <location evidence="1">Cell inner membrane</location>
        <topology evidence="1">Multi-pass membrane protein</topology>
    </subcellularLocation>
</comment>
<comment type="similarity">
    <text evidence="1">Belongs to the glycosyltransferase 2 family.</text>
</comment>
<dbReference type="EC" id="2.4.2.53" evidence="1"/>
<dbReference type="EMBL" id="AP008232">
    <property type="protein sequence ID" value="BAE75119.1"/>
    <property type="molecule type" value="Genomic_DNA"/>
</dbReference>
<dbReference type="RefSeq" id="WP_011411791.1">
    <property type="nucleotide sequence ID" value="NC_007712.1"/>
</dbReference>
<dbReference type="SMR" id="Q2NRV6"/>
<dbReference type="STRING" id="343509.SG1844"/>
<dbReference type="CAZy" id="GT2">
    <property type="family name" value="Glycosyltransferase Family 2"/>
</dbReference>
<dbReference type="KEGG" id="sgl:SG1844"/>
<dbReference type="eggNOG" id="COG0463">
    <property type="taxonomic scope" value="Bacteria"/>
</dbReference>
<dbReference type="HOGENOM" id="CLU_033536_0_0_6"/>
<dbReference type="OrthoDB" id="9811884at2"/>
<dbReference type="BioCyc" id="SGLO343509:SGP1_RS16690-MONOMER"/>
<dbReference type="UniPathway" id="UPA00030"/>
<dbReference type="UniPathway" id="UPA00036">
    <property type="reaction ID" value="UER00495"/>
</dbReference>
<dbReference type="Proteomes" id="UP000001932">
    <property type="component" value="Chromosome"/>
</dbReference>
<dbReference type="GO" id="GO:0005886">
    <property type="term" value="C:plasma membrane"/>
    <property type="evidence" value="ECO:0007669"/>
    <property type="project" value="UniProtKB-SubCell"/>
</dbReference>
<dbReference type="GO" id="GO:0016780">
    <property type="term" value="F:phosphotransferase activity, for other substituted phosphate groups"/>
    <property type="evidence" value="ECO:0007669"/>
    <property type="project" value="UniProtKB-UniRule"/>
</dbReference>
<dbReference type="GO" id="GO:0099621">
    <property type="term" value="F:undecaprenyl-phosphate 4-deoxy-4-formamido-L-arabinose transferase activity"/>
    <property type="evidence" value="ECO:0007669"/>
    <property type="project" value="UniProtKB-EC"/>
</dbReference>
<dbReference type="GO" id="GO:0036108">
    <property type="term" value="P:4-amino-4-deoxy-alpha-L-arabinopyranosyl undecaprenyl phosphate biosynthetic process"/>
    <property type="evidence" value="ECO:0007669"/>
    <property type="project" value="UniProtKB-UniRule"/>
</dbReference>
<dbReference type="GO" id="GO:0009245">
    <property type="term" value="P:lipid A biosynthetic process"/>
    <property type="evidence" value="ECO:0007669"/>
    <property type="project" value="UniProtKB-UniRule"/>
</dbReference>
<dbReference type="GO" id="GO:0009103">
    <property type="term" value="P:lipopolysaccharide biosynthetic process"/>
    <property type="evidence" value="ECO:0007669"/>
    <property type="project" value="UniProtKB-UniRule"/>
</dbReference>
<dbReference type="GO" id="GO:0046677">
    <property type="term" value="P:response to antibiotic"/>
    <property type="evidence" value="ECO:0007669"/>
    <property type="project" value="UniProtKB-KW"/>
</dbReference>
<dbReference type="CDD" id="cd04187">
    <property type="entry name" value="DPM1_like_bac"/>
    <property type="match status" value="1"/>
</dbReference>
<dbReference type="FunFam" id="3.90.550.10:FF:000019">
    <property type="entry name" value="Undecaprenyl-phosphate 4-deoxy-4-formamido-L-arabinose transferase"/>
    <property type="match status" value="1"/>
</dbReference>
<dbReference type="Gene3D" id="3.90.550.10">
    <property type="entry name" value="Spore Coat Polysaccharide Biosynthesis Protein SpsA, Chain A"/>
    <property type="match status" value="1"/>
</dbReference>
<dbReference type="HAMAP" id="MF_01164">
    <property type="entry name" value="ArnC_transfer"/>
    <property type="match status" value="1"/>
</dbReference>
<dbReference type="InterPro" id="IPR022857">
    <property type="entry name" value="ArnC_tfrase"/>
</dbReference>
<dbReference type="InterPro" id="IPR001173">
    <property type="entry name" value="Glyco_trans_2-like"/>
</dbReference>
<dbReference type="InterPro" id="IPR050256">
    <property type="entry name" value="Glycosyltransferase_2"/>
</dbReference>
<dbReference type="InterPro" id="IPR029044">
    <property type="entry name" value="Nucleotide-diphossugar_trans"/>
</dbReference>
<dbReference type="NCBIfam" id="NF007986">
    <property type="entry name" value="PRK10714.1"/>
    <property type="match status" value="1"/>
</dbReference>
<dbReference type="PANTHER" id="PTHR48090:SF3">
    <property type="entry name" value="UNDECAPRENYL-PHOSPHATE 4-DEOXY-4-FORMAMIDO-L-ARABINOSE TRANSFERASE"/>
    <property type="match status" value="1"/>
</dbReference>
<dbReference type="PANTHER" id="PTHR48090">
    <property type="entry name" value="UNDECAPRENYL-PHOSPHATE 4-DEOXY-4-FORMAMIDO-L-ARABINOSE TRANSFERASE-RELATED"/>
    <property type="match status" value="1"/>
</dbReference>
<dbReference type="Pfam" id="PF00535">
    <property type="entry name" value="Glycos_transf_2"/>
    <property type="match status" value="1"/>
</dbReference>
<dbReference type="SUPFAM" id="SSF53448">
    <property type="entry name" value="Nucleotide-diphospho-sugar transferases"/>
    <property type="match status" value="1"/>
</dbReference>
<evidence type="ECO:0000255" key="1">
    <source>
        <dbReference type="HAMAP-Rule" id="MF_01164"/>
    </source>
</evidence>
<organism>
    <name type="scientific">Sodalis glossinidius (strain morsitans)</name>
    <dbReference type="NCBI Taxonomy" id="343509"/>
    <lineage>
        <taxon>Bacteria</taxon>
        <taxon>Pseudomonadati</taxon>
        <taxon>Pseudomonadota</taxon>
        <taxon>Gammaproteobacteria</taxon>
        <taxon>Enterobacterales</taxon>
        <taxon>Bruguierivoracaceae</taxon>
        <taxon>Sodalis</taxon>
    </lineage>
</organism>
<proteinExistence type="inferred from homology"/>
<gene>
    <name evidence="1" type="primary">arnC</name>
    <name type="ordered locus">SG1844</name>
</gene>
<name>ARNC_SODGM</name>
<accession>Q2NRV6</accession>
<keyword id="KW-0046">Antibiotic resistance</keyword>
<keyword id="KW-0997">Cell inner membrane</keyword>
<keyword id="KW-1003">Cell membrane</keyword>
<keyword id="KW-0328">Glycosyltransferase</keyword>
<keyword id="KW-0441">Lipid A biosynthesis</keyword>
<keyword id="KW-0444">Lipid biosynthesis</keyword>
<keyword id="KW-0443">Lipid metabolism</keyword>
<keyword id="KW-0448">Lipopolysaccharide biosynthesis</keyword>
<keyword id="KW-0472">Membrane</keyword>
<keyword id="KW-0808">Transferase</keyword>
<keyword id="KW-0812">Transmembrane</keyword>
<keyword id="KW-1133">Transmembrane helix</keyword>
<sequence length="326" mass="36401">MTTPMKIDKVSIVIPVYNEQESLPELMRRTVAACEQLDAAYEILLVDDGSSDDSAAVLTAAAEAPGSHIVAVLLNRNYGQHSAIMAGFSHVTGDLVVTLDADLQNPPEEIPRLVEVAAQDYDVVGTVRQNRQDSWFRKRASRMINALIQRTTGKAMGDYGCMLRAYRRHIIDAMLHCHERSTFIPILANTFARKTIEIPVMHSEREFGDSKYSLMKLVNLMYDLVTCLTTTPLRMLSVIGSMIALLGFAFSLLLITLRLFLGSHWAAEGVFMLFAVLFIFIGAQFIGMGLLGEYIGRIYNDVRARPRYFVQCVVSQNPLSSQQETQ</sequence>